<accession>B1IGF6</accession>
<sequence length="397" mass="43483">MAKAKFERSKPHVNIGTIGHVDHGKTTLTAAITTVLAQKGGASATKYDEIDKAPEEKERGITINTSHVEYETANRHYAHVDCPGHADYVKNMITGAAQMDGAILVVSAADGPMPQTREHILLASRVGVQYIVVFLNKADQVDDPELIELVEMEVRELLNEYGFPGDDTPIVVGSALEVLENQDNAEKTKCIDELMEAIDSYIPTPERATDQPFLMPVEDVFTITGRGTVATGRVERGVLHTGDEVELIGMKQEVSKTVCTGIEMFRKILDEAMAGDNIGALLRGIQRDEIQRGQVLAKPGSVTPHKKFVGQVYVLKKEEGGRHTPFFNGYRPQFYFRTTDVTGSINLPEGVEMVMPGDHIDMAVELITPVAMHENLRFAIREGGRTVGSGVVTTISE</sequence>
<proteinExistence type="inferred from homology"/>
<feature type="chain" id="PRO_0000337360" description="Elongation factor Tu">
    <location>
        <begin position="1"/>
        <end position="397"/>
    </location>
</feature>
<feature type="domain" description="tr-type G">
    <location>
        <begin position="10"/>
        <end position="206"/>
    </location>
</feature>
<feature type="region of interest" description="G1" evidence="1">
    <location>
        <begin position="19"/>
        <end position="26"/>
    </location>
</feature>
<feature type="region of interest" description="G2" evidence="1">
    <location>
        <begin position="60"/>
        <end position="64"/>
    </location>
</feature>
<feature type="region of interest" description="G3" evidence="1">
    <location>
        <begin position="81"/>
        <end position="84"/>
    </location>
</feature>
<feature type="region of interest" description="G4" evidence="1">
    <location>
        <begin position="136"/>
        <end position="139"/>
    </location>
</feature>
<feature type="region of interest" description="G5" evidence="1">
    <location>
        <begin position="174"/>
        <end position="176"/>
    </location>
</feature>
<feature type="binding site" evidence="2">
    <location>
        <begin position="19"/>
        <end position="26"/>
    </location>
    <ligand>
        <name>GTP</name>
        <dbReference type="ChEBI" id="CHEBI:37565"/>
    </ligand>
</feature>
<feature type="binding site" evidence="2">
    <location>
        <position position="26"/>
    </location>
    <ligand>
        <name>Mg(2+)</name>
        <dbReference type="ChEBI" id="CHEBI:18420"/>
    </ligand>
</feature>
<feature type="binding site" evidence="2">
    <location>
        <begin position="81"/>
        <end position="85"/>
    </location>
    <ligand>
        <name>GTP</name>
        <dbReference type="ChEBI" id="CHEBI:37565"/>
    </ligand>
</feature>
<feature type="binding site" evidence="2">
    <location>
        <begin position="136"/>
        <end position="139"/>
    </location>
    <ligand>
        <name>GTP</name>
        <dbReference type="ChEBI" id="CHEBI:37565"/>
    </ligand>
</feature>
<organism>
    <name type="scientific">Clostridium botulinum (strain Okra / Type B1)</name>
    <dbReference type="NCBI Taxonomy" id="498213"/>
    <lineage>
        <taxon>Bacteria</taxon>
        <taxon>Bacillati</taxon>
        <taxon>Bacillota</taxon>
        <taxon>Clostridia</taxon>
        <taxon>Eubacteriales</taxon>
        <taxon>Clostridiaceae</taxon>
        <taxon>Clostridium</taxon>
    </lineage>
</organism>
<keyword id="KW-0963">Cytoplasm</keyword>
<keyword id="KW-0251">Elongation factor</keyword>
<keyword id="KW-0342">GTP-binding</keyword>
<keyword id="KW-0378">Hydrolase</keyword>
<keyword id="KW-0460">Magnesium</keyword>
<keyword id="KW-0479">Metal-binding</keyword>
<keyword id="KW-0547">Nucleotide-binding</keyword>
<keyword id="KW-0648">Protein biosynthesis</keyword>
<reference key="1">
    <citation type="journal article" date="2007" name="PLoS ONE">
        <title>Analysis of the neurotoxin complex genes in Clostridium botulinum A1-A4 and B1 strains: BoNT/A3, /Ba4 and /B1 clusters are located within plasmids.</title>
        <authorList>
            <person name="Smith T.J."/>
            <person name="Hill K.K."/>
            <person name="Foley B.T."/>
            <person name="Detter J.C."/>
            <person name="Munk A.C."/>
            <person name="Bruce D.C."/>
            <person name="Doggett N.A."/>
            <person name="Smith L.A."/>
            <person name="Marks J.D."/>
            <person name="Xie G."/>
            <person name="Brettin T.S."/>
        </authorList>
    </citation>
    <scope>NUCLEOTIDE SEQUENCE [LARGE SCALE GENOMIC DNA]</scope>
    <source>
        <strain>Okra / Type B1</strain>
    </source>
</reference>
<gene>
    <name evidence="2" type="primary">tuf1</name>
    <name type="ordered locus">CLD_1008</name>
</gene>
<gene>
    <name evidence="2" type="primary">tuf2</name>
    <name type="ordered locus">CLD_1022</name>
</gene>
<protein>
    <recommendedName>
        <fullName evidence="2">Elongation factor Tu</fullName>
        <shortName evidence="2">EF-Tu</shortName>
        <ecNumber evidence="2">3.6.5.3</ecNumber>
    </recommendedName>
</protein>
<evidence type="ECO:0000250" key="1"/>
<evidence type="ECO:0000255" key="2">
    <source>
        <dbReference type="HAMAP-Rule" id="MF_00118"/>
    </source>
</evidence>
<comment type="function">
    <text evidence="2">GTP hydrolase that promotes the GTP-dependent binding of aminoacyl-tRNA to the A-site of ribosomes during protein biosynthesis.</text>
</comment>
<comment type="catalytic activity">
    <reaction evidence="2">
        <text>GTP + H2O = GDP + phosphate + H(+)</text>
        <dbReference type="Rhea" id="RHEA:19669"/>
        <dbReference type="ChEBI" id="CHEBI:15377"/>
        <dbReference type="ChEBI" id="CHEBI:15378"/>
        <dbReference type="ChEBI" id="CHEBI:37565"/>
        <dbReference type="ChEBI" id="CHEBI:43474"/>
        <dbReference type="ChEBI" id="CHEBI:58189"/>
        <dbReference type="EC" id="3.6.5.3"/>
    </reaction>
    <physiologicalReaction direction="left-to-right" evidence="2">
        <dbReference type="Rhea" id="RHEA:19670"/>
    </physiologicalReaction>
</comment>
<comment type="subunit">
    <text evidence="2">Monomer.</text>
</comment>
<comment type="subcellular location">
    <subcellularLocation>
        <location evidence="2">Cytoplasm</location>
    </subcellularLocation>
</comment>
<comment type="similarity">
    <text evidence="2">Belongs to the TRAFAC class translation factor GTPase superfamily. Classic translation factor GTPase family. EF-Tu/EF-1A subfamily.</text>
</comment>
<dbReference type="EC" id="3.6.5.3" evidence="2"/>
<dbReference type="EMBL" id="CP000939">
    <property type="protein sequence ID" value="ACA43802.1"/>
    <property type="molecule type" value="Genomic_DNA"/>
</dbReference>
<dbReference type="EMBL" id="CP000939">
    <property type="protein sequence ID" value="ACA44900.1"/>
    <property type="molecule type" value="Genomic_DNA"/>
</dbReference>
<dbReference type="SMR" id="B1IGF6"/>
<dbReference type="KEGG" id="cbb:CLD_1008"/>
<dbReference type="KEGG" id="cbb:CLD_1022"/>
<dbReference type="HOGENOM" id="CLU_007265_0_0_9"/>
<dbReference type="Proteomes" id="UP000008541">
    <property type="component" value="Chromosome"/>
</dbReference>
<dbReference type="GO" id="GO:0005829">
    <property type="term" value="C:cytosol"/>
    <property type="evidence" value="ECO:0007669"/>
    <property type="project" value="TreeGrafter"/>
</dbReference>
<dbReference type="GO" id="GO:0005525">
    <property type="term" value="F:GTP binding"/>
    <property type="evidence" value="ECO:0007669"/>
    <property type="project" value="UniProtKB-UniRule"/>
</dbReference>
<dbReference type="GO" id="GO:0003924">
    <property type="term" value="F:GTPase activity"/>
    <property type="evidence" value="ECO:0007669"/>
    <property type="project" value="InterPro"/>
</dbReference>
<dbReference type="GO" id="GO:0003746">
    <property type="term" value="F:translation elongation factor activity"/>
    <property type="evidence" value="ECO:0007669"/>
    <property type="project" value="UniProtKB-UniRule"/>
</dbReference>
<dbReference type="CDD" id="cd01884">
    <property type="entry name" value="EF_Tu"/>
    <property type="match status" value="1"/>
</dbReference>
<dbReference type="CDD" id="cd03697">
    <property type="entry name" value="EFTU_II"/>
    <property type="match status" value="1"/>
</dbReference>
<dbReference type="CDD" id="cd03707">
    <property type="entry name" value="EFTU_III"/>
    <property type="match status" value="1"/>
</dbReference>
<dbReference type="FunFam" id="2.40.30.10:FF:000001">
    <property type="entry name" value="Elongation factor Tu"/>
    <property type="match status" value="1"/>
</dbReference>
<dbReference type="FunFam" id="3.40.50.300:FF:000003">
    <property type="entry name" value="Elongation factor Tu"/>
    <property type="match status" value="1"/>
</dbReference>
<dbReference type="Gene3D" id="3.40.50.300">
    <property type="entry name" value="P-loop containing nucleotide triphosphate hydrolases"/>
    <property type="match status" value="1"/>
</dbReference>
<dbReference type="Gene3D" id="2.40.30.10">
    <property type="entry name" value="Translation factors"/>
    <property type="match status" value="2"/>
</dbReference>
<dbReference type="HAMAP" id="MF_00118_B">
    <property type="entry name" value="EF_Tu_B"/>
    <property type="match status" value="1"/>
</dbReference>
<dbReference type="InterPro" id="IPR041709">
    <property type="entry name" value="EF-Tu_GTP-bd"/>
</dbReference>
<dbReference type="InterPro" id="IPR050055">
    <property type="entry name" value="EF-Tu_GTPase"/>
</dbReference>
<dbReference type="InterPro" id="IPR004161">
    <property type="entry name" value="EFTu-like_2"/>
</dbReference>
<dbReference type="InterPro" id="IPR033720">
    <property type="entry name" value="EFTU_2"/>
</dbReference>
<dbReference type="InterPro" id="IPR031157">
    <property type="entry name" value="G_TR_CS"/>
</dbReference>
<dbReference type="InterPro" id="IPR027417">
    <property type="entry name" value="P-loop_NTPase"/>
</dbReference>
<dbReference type="InterPro" id="IPR005225">
    <property type="entry name" value="Small_GTP-bd"/>
</dbReference>
<dbReference type="InterPro" id="IPR000795">
    <property type="entry name" value="T_Tr_GTP-bd_dom"/>
</dbReference>
<dbReference type="InterPro" id="IPR009000">
    <property type="entry name" value="Transl_B-barrel_sf"/>
</dbReference>
<dbReference type="InterPro" id="IPR009001">
    <property type="entry name" value="Transl_elong_EF1A/Init_IF2_C"/>
</dbReference>
<dbReference type="InterPro" id="IPR004541">
    <property type="entry name" value="Transl_elong_EFTu/EF1A_bac/org"/>
</dbReference>
<dbReference type="InterPro" id="IPR004160">
    <property type="entry name" value="Transl_elong_EFTu/EF1A_C"/>
</dbReference>
<dbReference type="NCBIfam" id="TIGR00485">
    <property type="entry name" value="EF-Tu"/>
    <property type="match status" value="1"/>
</dbReference>
<dbReference type="NCBIfam" id="NF000766">
    <property type="entry name" value="PRK00049.1"/>
    <property type="match status" value="1"/>
</dbReference>
<dbReference type="NCBIfam" id="NF009372">
    <property type="entry name" value="PRK12735.1"/>
    <property type="match status" value="1"/>
</dbReference>
<dbReference type="NCBIfam" id="NF009373">
    <property type="entry name" value="PRK12736.1"/>
    <property type="match status" value="1"/>
</dbReference>
<dbReference type="NCBIfam" id="TIGR00231">
    <property type="entry name" value="small_GTP"/>
    <property type="match status" value="1"/>
</dbReference>
<dbReference type="PANTHER" id="PTHR43721:SF22">
    <property type="entry name" value="ELONGATION FACTOR TU, MITOCHONDRIAL"/>
    <property type="match status" value="1"/>
</dbReference>
<dbReference type="PANTHER" id="PTHR43721">
    <property type="entry name" value="ELONGATION FACTOR TU-RELATED"/>
    <property type="match status" value="1"/>
</dbReference>
<dbReference type="Pfam" id="PF00009">
    <property type="entry name" value="GTP_EFTU"/>
    <property type="match status" value="1"/>
</dbReference>
<dbReference type="Pfam" id="PF03144">
    <property type="entry name" value="GTP_EFTU_D2"/>
    <property type="match status" value="1"/>
</dbReference>
<dbReference type="Pfam" id="PF03143">
    <property type="entry name" value="GTP_EFTU_D3"/>
    <property type="match status" value="1"/>
</dbReference>
<dbReference type="PRINTS" id="PR00315">
    <property type="entry name" value="ELONGATNFCT"/>
</dbReference>
<dbReference type="SUPFAM" id="SSF50465">
    <property type="entry name" value="EF-Tu/eEF-1alpha/eIF2-gamma C-terminal domain"/>
    <property type="match status" value="1"/>
</dbReference>
<dbReference type="SUPFAM" id="SSF52540">
    <property type="entry name" value="P-loop containing nucleoside triphosphate hydrolases"/>
    <property type="match status" value="1"/>
</dbReference>
<dbReference type="SUPFAM" id="SSF50447">
    <property type="entry name" value="Translation proteins"/>
    <property type="match status" value="1"/>
</dbReference>
<dbReference type="PROSITE" id="PS00301">
    <property type="entry name" value="G_TR_1"/>
    <property type="match status" value="1"/>
</dbReference>
<dbReference type="PROSITE" id="PS51722">
    <property type="entry name" value="G_TR_2"/>
    <property type="match status" value="1"/>
</dbReference>
<name>EFTU_CLOBK</name>